<sequence>MIRRGDVYLADLSPVQGSEQGGVRPVVIIQNDTGNKYSPTVIVAAITGRINKAKIPTHVEIEKKKYKLDKDSVILLEQIRTLDKKRLKEKLTYLSDDKMKEVDNALMISLGLNAVAHQKN</sequence>
<comment type="function">
    <text evidence="1">Toxic component of a type II toxin-antitoxin (TA) system. Ribosome-independent, sequence-specific endoribonuclease that cleaves mRNA, thus inhibiting protein synthesis and inducing bacterial stasis. It cuts between the first and nucleotides of 5'-UACAU-3' in single-stranded RNA. Neutralized by coexpression with cognate antitoxin MazE.</text>
</comment>
<comment type="subunit">
    <text evidence="1">Forms a complex with MazE which is no longer active as an endoribonuclease.</text>
</comment>
<comment type="similarity">
    <text evidence="2">Belongs to the PemK/MazF family.</text>
</comment>
<proteinExistence type="inferred from homology"/>
<dbReference type="EC" id="3.1.-.-"/>
<dbReference type="EMBL" id="AP009324">
    <property type="protein sequence ID" value="BAF78936.1"/>
    <property type="molecule type" value="Genomic_DNA"/>
</dbReference>
<dbReference type="RefSeq" id="WP_000621175.1">
    <property type="nucleotide sequence ID" value="NZ_CTYB01000037.1"/>
</dbReference>
<dbReference type="BMRB" id="A7X4P5"/>
<dbReference type="SMR" id="A7X4P5"/>
<dbReference type="KEGG" id="saw:SAHV_2053"/>
<dbReference type="HOGENOM" id="CLU_121823_1_0_9"/>
<dbReference type="GO" id="GO:0003677">
    <property type="term" value="F:DNA binding"/>
    <property type="evidence" value="ECO:0007669"/>
    <property type="project" value="InterPro"/>
</dbReference>
<dbReference type="GO" id="GO:0003723">
    <property type="term" value="F:RNA binding"/>
    <property type="evidence" value="ECO:0007669"/>
    <property type="project" value="UniProtKB-KW"/>
</dbReference>
<dbReference type="GO" id="GO:0004521">
    <property type="term" value="F:RNA endonuclease activity"/>
    <property type="evidence" value="ECO:0007669"/>
    <property type="project" value="TreeGrafter"/>
</dbReference>
<dbReference type="GO" id="GO:0006402">
    <property type="term" value="P:mRNA catabolic process"/>
    <property type="evidence" value="ECO:0007669"/>
    <property type="project" value="TreeGrafter"/>
</dbReference>
<dbReference type="GO" id="GO:0016075">
    <property type="term" value="P:rRNA catabolic process"/>
    <property type="evidence" value="ECO:0007669"/>
    <property type="project" value="TreeGrafter"/>
</dbReference>
<dbReference type="Gene3D" id="2.30.30.110">
    <property type="match status" value="1"/>
</dbReference>
<dbReference type="InterPro" id="IPR003477">
    <property type="entry name" value="PemK-like"/>
</dbReference>
<dbReference type="InterPro" id="IPR011067">
    <property type="entry name" value="Plasmid_toxin/cell-grow_inhib"/>
</dbReference>
<dbReference type="PANTHER" id="PTHR33988:SF2">
    <property type="entry name" value="ENDORIBONUCLEASE MAZF"/>
    <property type="match status" value="1"/>
</dbReference>
<dbReference type="PANTHER" id="PTHR33988">
    <property type="entry name" value="ENDORIBONUCLEASE MAZF-RELATED"/>
    <property type="match status" value="1"/>
</dbReference>
<dbReference type="Pfam" id="PF02452">
    <property type="entry name" value="PemK_toxin"/>
    <property type="match status" value="1"/>
</dbReference>
<dbReference type="PIRSF" id="PIRSF033490">
    <property type="entry name" value="MazF"/>
    <property type="match status" value="1"/>
</dbReference>
<dbReference type="SUPFAM" id="SSF50118">
    <property type="entry name" value="Cell growth inhibitor/plasmid maintenance toxic component"/>
    <property type="match status" value="1"/>
</dbReference>
<accession>A7X4P5</accession>
<protein>
    <recommendedName>
        <fullName>Endoribonuclease MazF</fullName>
        <ecNumber>3.1.-.-</ecNumber>
    </recommendedName>
    <alternativeName>
        <fullName>Toxin MazF</fullName>
    </alternativeName>
    <alternativeName>
        <fullName>mRNA interferase MazF</fullName>
    </alternativeName>
</protein>
<name>MAZF_STAA1</name>
<feature type="chain" id="PRO_0000330698" description="Endoribonuclease MazF">
    <location>
        <begin position="1"/>
        <end position="120"/>
    </location>
</feature>
<organism>
    <name type="scientific">Staphylococcus aureus (strain Mu3 / ATCC 700698)</name>
    <dbReference type="NCBI Taxonomy" id="418127"/>
    <lineage>
        <taxon>Bacteria</taxon>
        <taxon>Bacillati</taxon>
        <taxon>Bacillota</taxon>
        <taxon>Bacilli</taxon>
        <taxon>Bacillales</taxon>
        <taxon>Staphylococcaceae</taxon>
        <taxon>Staphylococcus</taxon>
    </lineage>
</organism>
<evidence type="ECO:0000250" key="1">
    <source>
        <dbReference type="UniProtKB" id="A6QIR4"/>
    </source>
</evidence>
<evidence type="ECO:0000305" key="2"/>
<gene>
    <name type="primary">mazF</name>
    <name type="ordered locus">SAHV_2053</name>
</gene>
<keyword id="KW-0255">Endonuclease</keyword>
<keyword id="KW-0378">Hydrolase</keyword>
<keyword id="KW-0540">Nuclease</keyword>
<keyword id="KW-0694">RNA-binding</keyword>
<keyword id="KW-1277">Toxin-antitoxin system</keyword>
<reference key="1">
    <citation type="journal article" date="2008" name="Antimicrob. Agents Chemother.">
        <title>Mutated response regulator graR is responsible for phenotypic conversion of Staphylococcus aureus from heterogeneous vancomycin-intermediate resistance to vancomycin-intermediate resistance.</title>
        <authorList>
            <person name="Neoh H.-M."/>
            <person name="Cui L."/>
            <person name="Yuzawa H."/>
            <person name="Takeuchi F."/>
            <person name="Matsuo M."/>
            <person name="Hiramatsu K."/>
        </authorList>
    </citation>
    <scope>NUCLEOTIDE SEQUENCE [LARGE SCALE GENOMIC DNA]</scope>
    <source>
        <strain>Mu3 / ATCC 700698</strain>
    </source>
</reference>